<proteinExistence type="evidence at protein level"/>
<keyword id="KW-0067">ATP-binding</keyword>
<keyword id="KW-0963">Cytoplasm</keyword>
<keyword id="KW-0347">Helicase</keyword>
<keyword id="KW-0378">Hydrolase</keyword>
<keyword id="KW-0479">Metal-binding</keyword>
<keyword id="KW-0547">Nucleotide-binding</keyword>
<keyword id="KW-0597">Phosphoprotein</keyword>
<keyword id="KW-1185">Reference proteome</keyword>
<keyword id="KW-0677">Repeat</keyword>
<keyword id="KW-0694">RNA-binding</keyword>
<keyword id="KW-0862">Zinc</keyword>
<keyword id="KW-0863">Zinc-finger</keyword>
<feature type="chain" id="PRO_0000055089" description="ATP-dependent RNA helicase glh-1">
    <location>
        <begin position="1"/>
        <end position="763"/>
    </location>
</feature>
<feature type="repeat" description="1">
    <location>
        <begin position="24"/>
        <end position="33"/>
    </location>
</feature>
<feature type="repeat" description="2">
    <location>
        <begin position="34"/>
        <end position="43"/>
    </location>
</feature>
<feature type="repeat" description="3">
    <location>
        <begin position="44"/>
        <end position="53"/>
    </location>
</feature>
<feature type="repeat" description="4">
    <location>
        <begin position="54"/>
        <end position="63"/>
    </location>
</feature>
<feature type="repeat" description="5">
    <location>
        <begin position="64"/>
        <end position="73"/>
    </location>
</feature>
<feature type="repeat" description="6">
    <location>
        <begin position="74"/>
        <end position="83"/>
    </location>
</feature>
<feature type="repeat" description="7">
    <location>
        <begin position="84"/>
        <end position="93"/>
    </location>
</feature>
<feature type="domain" description="Helicase ATP-binding" evidence="2">
    <location>
        <begin position="372"/>
        <end position="556"/>
    </location>
</feature>
<feature type="domain" description="Helicase C-terminal" evidence="3">
    <location>
        <begin position="592"/>
        <end position="739"/>
    </location>
</feature>
<feature type="zinc finger region" description="CCHC-type 1" evidence="1">
    <location>
        <begin position="158"/>
        <end position="175"/>
    </location>
</feature>
<feature type="zinc finger region" description="CCHC-type 2" evidence="1">
    <location>
        <begin position="183"/>
        <end position="200"/>
    </location>
</feature>
<feature type="zinc finger region" description="CCHC-type 3" evidence="1">
    <location>
        <begin position="242"/>
        <end position="259"/>
    </location>
</feature>
<feature type="zinc finger region" description="CCHC-type 4" evidence="1">
    <location>
        <begin position="262"/>
        <end position="279"/>
    </location>
</feature>
<feature type="region of interest" description="Disordered" evidence="4">
    <location>
        <begin position="1"/>
        <end position="30"/>
    </location>
</feature>
<feature type="region of interest" description="7 X 10 AA tandem repeats, Gly-rich">
    <location>
        <begin position="24"/>
        <end position="93"/>
    </location>
</feature>
<feature type="region of interest" description="Disordered" evidence="4">
    <location>
        <begin position="193"/>
        <end position="230"/>
    </location>
</feature>
<feature type="short sequence motif" description="Q motif">
    <location>
        <begin position="341"/>
        <end position="369"/>
    </location>
</feature>
<feature type="short sequence motif" description="Phosphodegron" evidence="14">
    <location>
        <begin position="423"/>
        <end position="427"/>
    </location>
</feature>
<feature type="short sequence motif" description="DEAD box">
    <location>
        <begin position="499"/>
        <end position="502"/>
    </location>
</feature>
<feature type="compositionally biased region" description="Gly residues" evidence="4">
    <location>
        <begin position="18"/>
        <end position="30"/>
    </location>
</feature>
<feature type="compositionally biased region" description="Basic and acidic residues" evidence="4">
    <location>
        <begin position="194"/>
        <end position="208"/>
    </location>
</feature>
<feature type="compositionally biased region" description="Gly residues" evidence="4">
    <location>
        <begin position="209"/>
        <end position="230"/>
    </location>
</feature>
<feature type="binding site" evidence="2">
    <location>
        <begin position="385"/>
        <end position="392"/>
    </location>
    <ligand>
        <name>ATP</name>
        <dbReference type="ChEBI" id="CHEBI:30616"/>
    </ligand>
</feature>
<feature type="mutagenesis site" description="Partially abolishes the interaction with kgb-1; when associated with W-588. No effect on the interaction with kgb-1; when associated with W-589." evidence="6">
    <original>K</original>
    <variation>N</variation>
    <location>
        <position position="581"/>
    </location>
</feature>
<feature type="mutagenesis site" description="Partially abolishes the interaction with kgb-1; when associated with N-581." evidence="6">
    <original>L</original>
    <variation>W</variation>
    <location>
        <position position="588"/>
    </location>
</feature>
<feature type="mutagenesis site" description="No effect on the interaction with kgb-1; when associated with N-581." evidence="6">
    <original>L</original>
    <variation>W</variation>
    <location>
        <position position="589"/>
    </location>
</feature>
<feature type="sequence conflict" description="In Ref. 3; AAB04136." evidence="15" ref="3">
    <original>T</original>
    <variation>A</variation>
    <location>
        <position position="69"/>
    </location>
</feature>
<feature type="sequence conflict" description="In Ref. 1; AAC27384." evidence="15" ref="1">
    <original>T</original>
    <variation>I</variation>
    <location>
        <position position="621"/>
    </location>
</feature>
<protein>
    <recommendedName>
        <fullName>ATP-dependent RNA helicase glh-1</fullName>
        <ecNumber>3.6.4.13</ecNumber>
    </recommendedName>
    <alternativeName>
        <fullName>Germline helicase 1</fullName>
    </alternativeName>
</protein>
<name>GLH1_CAEEL</name>
<comment type="function">
    <text evidence="7 8 10 11 16 17">Probable ATP-binding RNA helicase (PubMed:8415696). May act redundantly with the P-granule component glh-4 to regulate the formation of the granular structure of P-granules in embryos (PubMed:21402787, PubMed:24746798). Plays a role in positively regulating the localization of pgl-1 to P-granules (PubMed:18234720). May play a role in transgenerational epigenetic inheritance (PubMed:28533440). May protect somatic cells from excessive apoptosis during normal development (PubMed:27650246).</text>
</comment>
<comment type="catalytic activity">
    <reaction>
        <text>ATP + H2O = ADP + phosphate + H(+)</text>
        <dbReference type="Rhea" id="RHEA:13065"/>
        <dbReference type="ChEBI" id="CHEBI:15377"/>
        <dbReference type="ChEBI" id="CHEBI:15378"/>
        <dbReference type="ChEBI" id="CHEBI:30616"/>
        <dbReference type="ChEBI" id="CHEBI:43474"/>
        <dbReference type="ChEBI" id="CHEBI:456216"/>
        <dbReference type="EC" id="3.6.4.13"/>
    </reaction>
</comment>
<comment type="subunit">
    <text evidence="5 6 9 14">Interacts with csn-5; this may prevent glh-1 degradation induced by kgb-1 (PubMed:12435362, PubMed:17699606). Interacts with zyx-1 (PubMed:12435362). Interacts (via the N-terminal region containing the four CCHC zinc fingers) with pan-1 (PubMed:22342905). Interacts with kgb-1; this may promote glh-1 degradation by the proteasome (PubMed:17699606).</text>
</comment>
<comment type="interaction">
    <interactant intactId="EBI-1571791">
        <id>P34689</id>
    </interactant>
    <interactant intactId="EBI-313007">
        <id>P91001</id>
        <label>csn-5</label>
    </interactant>
    <organismsDiffer>false</organismsDiffer>
    <experiments>3</experiments>
</comment>
<comment type="interaction">
    <interactant intactId="EBI-1571791">
        <id>P34689</id>
    </interactant>
    <interactant intactId="EBI-1571750">
        <id>O01836</id>
        <label>glh-3</label>
    </interactant>
    <organismsDiffer>false</organismsDiffer>
    <experiments>2</experiments>
</comment>
<comment type="subcellular location">
    <subcellularLocation>
        <location evidence="6 8">Cytoplasm</location>
    </subcellularLocation>
    <subcellularLocation>
        <location evidence="6">Cytoplasmic granule</location>
    </subcellularLocation>
    <subcellularLocation>
        <location evidence="6">Cytoplasm</location>
        <location evidence="6">Perinuclear region</location>
    </subcellularLocation>
    <text evidence="6">Perinuclear localization in germ cells but disperses into particles in cellularized oocytes. Component of P granules.</text>
</comment>
<comment type="developmental stage">
    <text evidence="13">First expressed during the L3-L4 stages of larval development, coinciding with germline proliferation.</text>
</comment>
<comment type="PTM">
    <text evidence="6">Phosphorylated by kgb-1 (in vitro); this may be responsible for its degradation by the proteasome.</text>
</comment>
<comment type="disruption phenotype">
    <text evidence="8 10 11 12">Mortal germline (Mrt) phenotype in which there is a progressive decline in fertility with each generation at 25 degrees Celsius (PubMed:28533440). RNAi-mediated knockdown in a glh-4 mutant background results in smaller P-granules and irregular cytoplasmic localization of the P-granule component pgl-3 in embryos (PubMed:21402787). Quadruple RNAi-mediated knockdown with glh-4, pgl-1 and pgl-3 results in offspring that display 27-89% sterility, abnormal oocytes and do not have embryos in the uterus (PubMed:24746798). These sterile offspring still produce sperm (PubMed:24746798). Furthermore, these offspring may have compromised P-granule integrity as there is diffuse cytoplasmic localization of the P-granule component deps-1, which may cause germ cells to initiate somatic reprogramming (PubMed:24746798). RNAi-mediated knockdown in a double ced-1 and hpl-2 mutant background rescues the reduced somatic cell apoptotic cell defect in the ced-1 and hpl-2 double knockout (PubMed:27650246).</text>
</comment>
<comment type="similarity">
    <text evidence="15">Belongs to the DEAD box helicase family. DDX4/VASA subfamily.</text>
</comment>
<dbReference type="EC" id="3.6.4.13"/>
<dbReference type="EMBL" id="L19948">
    <property type="protein sequence ID" value="AAC27384.1"/>
    <property type="molecule type" value="mRNA"/>
</dbReference>
<dbReference type="EMBL" id="U62772">
    <property type="protein sequence ID" value="AAB04136.1"/>
    <property type="molecule type" value="Genomic_DNA"/>
</dbReference>
<dbReference type="EMBL" id="BX284601">
    <property type="protein sequence ID" value="CCD67591.1"/>
    <property type="molecule type" value="Genomic_DNA"/>
</dbReference>
<dbReference type="PIR" id="A48686">
    <property type="entry name" value="A48686"/>
</dbReference>
<dbReference type="PIR" id="C87818">
    <property type="entry name" value="C87818"/>
</dbReference>
<dbReference type="PIR" id="T15132">
    <property type="entry name" value="T15132"/>
</dbReference>
<dbReference type="RefSeq" id="NP_491963.1">
    <property type="nucleotide sequence ID" value="NM_059562.6"/>
</dbReference>
<dbReference type="SMR" id="P34689"/>
<dbReference type="BioGRID" id="37860">
    <property type="interactions" value="425"/>
</dbReference>
<dbReference type="FunCoup" id="P34689">
    <property type="interactions" value="8"/>
</dbReference>
<dbReference type="IntAct" id="P34689">
    <property type="interactions" value="4"/>
</dbReference>
<dbReference type="STRING" id="6239.T21G5.3.1"/>
<dbReference type="iPTMnet" id="P34689"/>
<dbReference type="PaxDb" id="6239-T21G5.3"/>
<dbReference type="PeptideAtlas" id="P34689"/>
<dbReference type="EnsemblMetazoa" id="T21G5.3.1">
    <property type="protein sequence ID" value="T21G5.3.1"/>
    <property type="gene ID" value="WBGene00001598"/>
</dbReference>
<dbReference type="GeneID" id="172414"/>
<dbReference type="KEGG" id="cel:CELE_T21G5.3"/>
<dbReference type="UCSC" id="T21G5.3">
    <property type="organism name" value="c. elegans"/>
</dbReference>
<dbReference type="AGR" id="WB:WBGene00001598"/>
<dbReference type="CTD" id="172414"/>
<dbReference type="WormBase" id="T21G5.3">
    <property type="protein sequence ID" value="CE25121"/>
    <property type="gene ID" value="WBGene00001598"/>
    <property type="gene designation" value="glh-1"/>
</dbReference>
<dbReference type="eggNOG" id="KOG0335">
    <property type="taxonomic scope" value="Eukaryota"/>
</dbReference>
<dbReference type="GeneTree" id="ENSGT00940000157507"/>
<dbReference type="HOGENOM" id="CLU_003041_16_3_1"/>
<dbReference type="InParanoid" id="P34689"/>
<dbReference type="OMA" id="VIRVACC"/>
<dbReference type="OrthoDB" id="196131at2759"/>
<dbReference type="PhylomeDB" id="P34689"/>
<dbReference type="SignaLink" id="P34689"/>
<dbReference type="CD-CODE" id="73A75392">
    <property type="entry name" value="P-granule"/>
</dbReference>
<dbReference type="PRO" id="PR:P34689"/>
<dbReference type="Proteomes" id="UP000001940">
    <property type="component" value="Chromosome I"/>
</dbReference>
<dbReference type="Bgee" id="WBGene00001598">
    <property type="expression patterns" value="Expressed in germ line (C elegans) and 4 other cell types or tissues"/>
</dbReference>
<dbReference type="GO" id="GO:0005737">
    <property type="term" value="C:cytoplasm"/>
    <property type="evidence" value="ECO:0000314"/>
    <property type="project" value="WormBase"/>
</dbReference>
<dbReference type="GO" id="GO:0005634">
    <property type="term" value="C:nucleus"/>
    <property type="evidence" value="ECO:0000318"/>
    <property type="project" value="GO_Central"/>
</dbReference>
<dbReference type="GO" id="GO:0043186">
    <property type="term" value="C:P granule"/>
    <property type="evidence" value="ECO:0000314"/>
    <property type="project" value="WormBase"/>
</dbReference>
<dbReference type="GO" id="GO:0048471">
    <property type="term" value="C:perinuclear region of cytoplasm"/>
    <property type="evidence" value="ECO:0007669"/>
    <property type="project" value="UniProtKB-SubCell"/>
</dbReference>
<dbReference type="GO" id="GO:0005524">
    <property type="term" value="F:ATP binding"/>
    <property type="evidence" value="ECO:0007669"/>
    <property type="project" value="UniProtKB-KW"/>
</dbReference>
<dbReference type="GO" id="GO:0016887">
    <property type="term" value="F:ATP hydrolysis activity"/>
    <property type="evidence" value="ECO:0007669"/>
    <property type="project" value="RHEA"/>
</dbReference>
<dbReference type="GO" id="GO:0017151">
    <property type="term" value="F:DEAD/H-box RNA helicase binding"/>
    <property type="evidence" value="ECO:0000353"/>
    <property type="project" value="WormBase"/>
</dbReference>
<dbReference type="GO" id="GO:0008432">
    <property type="term" value="F:JUN kinase binding"/>
    <property type="evidence" value="ECO:0000353"/>
    <property type="project" value="WormBase"/>
</dbReference>
<dbReference type="GO" id="GO:0003729">
    <property type="term" value="F:mRNA binding"/>
    <property type="evidence" value="ECO:0000318"/>
    <property type="project" value="GO_Central"/>
</dbReference>
<dbReference type="GO" id="GO:0003724">
    <property type="term" value="F:RNA helicase activity"/>
    <property type="evidence" value="ECO:0000314"/>
    <property type="project" value="WormBase"/>
</dbReference>
<dbReference type="GO" id="GO:0008270">
    <property type="term" value="F:zinc ion binding"/>
    <property type="evidence" value="ECO:0007669"/>
    <property type="project" value="UniProtKB-KW"/>
</dbReference>
<dbReference type="GO" id="GO:0030154">
    <property type="term" value="P:cell differentiation"/>
    <property type="evidence" value="ECO:0000318"/>
    <property type="project" value="GO_Central"/>
</dbReference>
<dbReference type="GO" id="GO:0007276">
    <property type="term" value="P:gamete generation"/>
    <property type="evidence" value="ECO:0000318"/>
    <property type="project" value="GO_Central"/>
</dbReference>
<dbReference type="GO" id="GO:0007281">
    <property type="term" value="P:germ cell development"/>
    <property type="evidence" value="ECO:0000315"/>
    <property type="project" value="WormBase"/>
</dbReference>
<dbReference type="GO" id="GO:0009791">
    <property type="term" value="P:post-embryonic development"/>
    <property type="evidence" value="ECO:0000315"/>
    <property type="project" value="WormBase"/>
</dbReference>
<dbReference type="GO" id="GO:0016070">
    <property type="term" value="P:RNA metabolic process"/>
    <property type="evidence" value="ECO:0000250"/>
    <property type="project" value="WormBase"/>
</dbReference>
<dbReference type="CDD" id="cd18787">
    <property type="entry name" value="SF2_C_DEAD"/>
    <property type="match status" value="1"/>
</dbReference>
<dbReference type="FunFam" id="4.10.60.10:FF:000144">
    <property type="entry name" value="ATP-dependent RNA helicase glh-2"/>
    <property type="match status" value="1"/>
</dbReference>
<dbReference type="FunFam" id="3.40.50.300:FF:000008">
    <property type="entry name" value="ATP-dependent RNA helicase RhlB"/>
    <property type="match status" value="1"/>
</dbReference>
<dbReference type="FunFam" id="3.40.50.300:FF:000657">
    <property type="entry name" value="Probable ATP-dependent RNA helicase DDX41"/>
    <property type="match status" value="1"/>
</dbReference>
<dbReference type="Gene3D" id="3.40.50.300">
    <property type="entry name" value="P-loop containing nucleotide triphosphate hydrolases"/>
    <property type="match status" value="2"/>
</dbReference>
<dbReference type="Gene3D" id="4.10.60.10">
    <property type="entry name" value="Zinc finger, CCHC-type"/>
    <property type="match status" value="3"/>
</dbReference>
<dbReference type="InterPro" id="IPR011545">
    <property type="entry name" value="DEAD/DEAH_box_helicase_dom"/>
</dbReference>
<dbReference type="InterPro" id="IPR014001">
    <property type="entry name" value="Helicase_ATP-bd"/>
</dbReference>
<dbReference type="InterPro" id="IPR001650">
    <property type="entry name" value="Helicase_C-like"/>
</dbReference>
<dbReference type="InterPro" id="IPR027417">
    <property type="entry name" value="P-loop_NTPase"/>
</dbReference>
<dbReference type="InterPro" id="IPR000629">
    <property type="entry name" value="RNA-helicase_DEAD-box_CS"/>
</dbReference>
<dbReference type="InterPro" id="IPR014014">
    <property type="entry name" value="RNA_helicase_DEAD_Q_motif"/>
</dbReference>
<dbReference type="InterPro" id="IPR001878">
    <property type="entry name" value="Znf_CCHC"/>
</dbReference>
<dbReference type="InterPro" id="IPR036875">
    <property type="entry name" value="Znf_CCHC_sf"/>
</dbReference>
<dbReference type="PANTHER" id="PTHR47958">
    <property type="entry name" value="ATP-DEPENDENT RNA HELICASE DBP3"/>
    <property type="match status" value="1"/>
</dbReference>
<dbReference type="Pfam" id="PF00270">
    <property type="entry name" value="DEAD"/>
    <property type="match status" value="1"/>
</dbReference>
<dbReference type="Pfam" id="PF00271">
    <property type="entry name" value="Helicase_C"/>
    <property type="match status" value="1"/>
</dbReference>
<dbReference type="Pfam" id="PF00098">
    <property type="entry name" value="zf-CCHC"/>
    <property type="match status" value="4"/>
</dbReference>
<dbReference type="SMART" id="SM00487">
    <property type="entry name" value="DEXDc"/>
    <property type="match status" value="1"/>
</dbReference>
<dbReference type="SMART" id="SM00490">
    <property type="entry name" value="HELICc"/>
    <property type="match status" value="1"/>
</dbReference>
<dbReference type="SMART" id="SM00343">
    <property type="entry name" value="ZnF_C2HC"/>
    <property type="match status" value="4"/>
</dbReference>
<dbReference type="SUPFAM" id="SSF52540">
    <property type="entry name" value="P-loop containing nucleoside triphosphate hydrolases"/>
    <property type="match status" value="1"/>
</dbReference>
<dbReference type="SUPFAM" id="SSF57756">
    <property type="entry name" value="Retrovirus zinc finger-like domains"/>
    <property type="match status" value="2"/>
</dbReference>
<dbReference type="PROSITE" id="PS00039">
    <property type="entry name" value="DEAD_ATP_HELICASE"/>
    <property type="match status" value="1"/>
</dbReference>
<dbReference type="PROSITE" id="PS51192">
    <property type="entry name" value="HELICASE_ATP_BIND_1"/>
    <property type="match status" value="1"/>
</dbReference>
<dbReference type="PROSITE" id="PS51194">
    <property type="entry name" value="HELICASE_CTER"/>
    <property type="match status" value="1"/>
</dbReference>
<dbReference type="PROSITE" id="PS51195">
    <property type="entry name" value="Q_MOTIF"/>
    <property type="match status" value="1"/>
</dbReference>
<dbReference type="PROSITE" id="PS50158">
    <property type="entry name" value="ZF_CCHC"/>
    <property type="match status" value="4"/>
</dbReference>
<accession>P34689</accession>
<accession>Q22873</accession>
<accession>Q7KQH5</accession>
<accession>Q9TXH4</accession>
<organism>
    <name type="scientific">Caenorhabditis elegans</name>
    <dbReference type="NCBI Taxonomy" id="6239"/>
    <lineage>
        <taxon>Eukaryota</taxon>
        <taxon>Metazoa</taxon>
        <taxon>Ecdysozoa</taxon>
        <taxon>Nematoda</taxon>
        <taxon>Chromadorea</taxon>
        <taxon>Rhabditida</taxon>
        <taxon>Rhabditina</taxon>
        <taxon>Rhabditomorpha</taxon>
        <taxon>Rhabditoidea</taxon>
        <taxon>Rhabditidae</taxon>
        <taxon>Peloderinae</taxon>
        <taxon>Caenorhabditis</taxon>
    </lineage>
</organism>
<evidence type="ECO:0000255" key="1">
    <source>
        <dbReference type="PROSITE-ProRule" id="PRU00047"/>
    </source>
</evidence>
<evidence type="ECO:0000255" key="2">
    <source>
        <dbReference type="PROSITE-ProRule" id="PRU00541"/>
    </source>
</evidence>
<evidence type="ECO:0000255" key="3">
    <source>
        <dbReference type="PROSITE-ProRule" id="PRU00542"/>
    </source>
</evidence>
<evidence type="ECO:0000256" key="4">
    <source>
        <dbReference type="SAM" id="MobiDB-lite"/>
    </source>
</evidence>
<evidence type="ECO:0000269" key="5">
    <source>
    </source>
</evidence>
<evidence type="ECO:0000269" key="6">
    <source>
    </source>
</evidence>
<evidence type="ECO:0000269" key="7">
    <source>
    </source>
</evidence>
<evidence type="ECO:0000269" key="8">
    <source>
    </source>
</evidence>
<evidence type="ECO:0000269" key="9">
    <source>
    </source>
</evidence>
<evidence type="ECO:0000269" key="10">
    <source>
    </source>
</evidence>
<evidence type="ECO:0000269" key="11">
    <source>
    </source>
</evidence>
<evidence type="ECO:0000269" key="12">
    <source>
    </source>
</evidence>
<evidence type="ECO:0000269" key="13">
    <source>
    </source>
</evidence>
<evidence type="ECO:0000303" key="14">
    <source>
    </source>
</evidence>
<evidence type="ECO:0000305" key="15"/>
<evidence type="ECO:0000305" key="16">
    <source>
    </source>
</evidence>
<evidence type="ECO:0000305" key="17">
    <source>
    </source>
</evidence>
<evidence type="ECO:0000312" key="18">
    <source>
        <dbReference type="WormBase" id="T21G5.3"/>
    </source>
</evidence>
<reference key="1">
    <citation type="journal article" date="1993" name="Proc. Natl. Acad. Sci. U.S.A.">
        <title>glh-1, a germ-line putative RNA helicase from Caenorhabditis, has four zinc fingers.</title>
        <authorList>
            <person name="Roussell D.L."/>
            <person name="Bennett K.L."/>
        </authorList>
    </citation>
    <scope>NUCLEOTIDE SEQUENCE [MRNA]</scope>
    <scope>FUNCTION</scope>
    <scope>DEVELOPMENTAL STAGE</scope>
    <source>
        <strain>Bristol N2</strain>
    </source>
</reference>
<reference key="2">
    <citation type="submission" date="1998-07" db="EMBL/GenBank/DDBJ databases">
        <authorList>
            <person name="Roussell D.L."/>
            <person name="McCrone J.S."/>
            <person name="Smith P.A."/>
            <person name="Gruidl M.E."/>
            <person name="Bennett K.L."/>
        </authorList>
    </citation>
    <scope>SEQUENCE REVISION TO 83-138; 275; 288 AND 398</scope>
</reference>
<reference key="3">
    <citation type="journal article" date="1996" name="Proc. Natl. Acad. Sci. U.S.A.">
        <title>Multiple potential germ-line helicases are components of the germ-line-specific P granules of Caenorhabditis elegans.</title>
        <authorList>
            <person name="Gruidl M.E."/>
            <person name="Smith P.A."/>
            <person name="Kuznicki K.A."/>
            <person name="McCrone J.S."/>
            <person name="Kirchner J."/>
            <person name="Roussell D.L."/>
            <person name="Strome S."/>
            <person name="Bennett K.L."/>
        </authorList>
    </citation>
    <scope>NUCLEOTIDE SEQUENCE [GENOMIC DNA]</scope>
    <source>
        <strain>Bristol N2</strain>
    </source>
</reference>
<reference key="4">
    <citation type="journal article" date="1998" name="Science">
        <title>Genome sequence of the nematode C. elegans: a platform for investigating biology.</title>
        <authorList>
            <consortium name="The C. elegans sequencing consortium"/>
        </authorList>
    </citation>
    <scope>NUCLEOTIDE SEQUENCE [LARGE SCALE GENOMIC DNA]</scope>
    <source>
        <strain>Bristol N2</strain>
    </source>
</reference>
<reference key="5">
    <citation type="journal article" date="2002" name="Dev. Biol.">
        <title>The GLH proteins, Caenorhabditis elegans P granule components, associate with CSN-5 and KGB-1, proteins necessary for fertility, and with ZYX-1, a predicted cytoskeletal protein.</title>
        <authorList>
            <person name="Smith P."/>
            <person name="Leung-Chiu W.-M."/>
            <person name="Montgomery R."/>
            <person name="Orsborn A."/>
            <person name="Kuznicki K."/>
            <person name="Gressman-Coberly E."/>
            <person name="Mutapcic L."/>
            <person name="Bennett K."/>
        </authorList>
    </citation>
    <scope>INTERACTION WITH CSN-5 AND ZYX-1</scope>
</reference>
<reference key="6">
    <citation type="journal article" date="2007" name="Development">
        <title>GLH-1, the C. elegans P granule protein, is controlled by the JNK KGB-1 and by the COP9 subunit CSN-5.</title>
        <authorList>
            <person name="Orsborn A.M."/>
            <person name="Li W."/>
            <person name="McEwen T.J."/>
            <person name="Mizuno T."/>
            <person name="Kuzmin E."/>
            <person name="Matsumoto K."/>
            <person name="Bennett K.L."/>
        </authorList>
    </citation>
    <scope>INTERACTION WITH KGB-1</scope>
    <scope>SUBCELLULAR LOCATION</scope>
    <scope>PHOSPHORYLATION BY KGB-1</scope>
    <scope>MOTIF</scope>
    <scope>MUTAGENESIS OF LYS-581; LEU-588 AND LEU-589</scope>
</reference>
<reference key="7">
    <citation type="journal article" date="2008" name="Development">
        <title>DEPS-1 promotes P-granule assembly and RNA interference in C. elegans germ cells.</title>
        <authorList>
            <person name="Spike C.A."/>
            <person name="Bader J."/>
            <person name="Reinke V."/>
            <person name="Strome S."/>
        </authorList>
    </citation>
    <scope>FUNCTION</scope>
</reference>
<reference key="8">
    <citation type="journal article" date="2011" name="J. Cell Biol.">
        <title>PGL proteins self associate and bind RNPs to mediate germ granule assembly in C. elegans.</title>
        <authorList>
            <person name="Hanazawa M."/>
            <person name="Yonetani M."/>
            <person name="Sugimoto A."/>
        </authorList>
    </citation>
    <scope>FUNCTION</scope>
    <scope>SUBCELLULAR LOCATION</scope>
    <scope>DISRUPTION PHENOTYPE</scope>
</reference>
<reference key="9">
    <citation type="journal article" date="2012" name="Dev. Biol.">
        <title>PAN-1, a P-granule component important for C. elegans fertility, has dual roles in the germline and soma.</title>
        <authorList>
            <person name="Gao G."/>
            <person name="Deeb F."/>
            <person name="Mercurio J.M."/>
            <person name="Parfenova A."/>
            <person name="Smith P.A."/>
            <person name="Bennett K.L."/>
        </authorList>
    </citation>
    <scope>INTERACTION WITH PAN-1</scope>
</reference>
<reference key="10">
    <citation type="journal article" date="2014" name="Curr. Biol.">
        <title>Germ-granule components prevent somatic development in the C. elegans germline.</title>
        <authorList>
            <person name="Updike D.L."/>
            <person name="Knutson A.K."/>
            <person name="Egelhofer T.A."/>
            <person name="Campbell A.C."/>
            <person name="Strome S."/>
        </authorList>
    </citation>
    <scope>FUNCTION</scope>
    <scope>DISRUPTION PHENOTYPE</scope>
</reference>
<reference key="11">
    <citation type="journal article" date="2016" name="Sci. Rep.">
        <title>Somatically expressed germ-granule components, PGL-1 and PGL-3, repress programmed cell death in C. elegans.</title>
        <authorList>
            <person name="Al-Amin M."/>
            <person name="Min H."/>
            <person name="Shim Y.H."/>
            <person name="Kawasaki I."/>
        </authorList>
    </citation>
    <scope>FUNCTION</scope>
    <scope>DISRUPTION PHENOTYPE</scope>
</reference>
<reference key="12">
    <citation type="journal article" date="2017" name="Genetics">
        <title>Identification and characterization of Caenorhabditis elegans RNAi inheritance machinery.</title>
        <authorList>
            <person name="Spracklin G."/>
            <person name="Fields B."/>
            <person name="Wan G."/>
            <person name="Vijayendran D."/>
            <person name="Wallig A."/>
            <person name="Shukla A."/>
            <person name="Kennedy S."/>
        </authorList>
    </citation>
    <scope>FUNCTION</scope>
    <scope>DISRUPTION PHENOTYPE</scope>
</reference>
<gene>
    <name evidence="18" type="primary">glh-1</name>
    <name evidence="18" type="ORF">T21G5.3</name>
</gene>
<sequence length="763" mass="79780">MSDGWSDSESAAKAKTGFGSGGGFGGGNNGGSGFGGGKNGGTGFGGGNTGGSGFGGGNTGGSGFGGGKTGGSGFGGGNTCGSGFGGGSTGGSPYGGASSGFGGSTATSGFGSGEKSSAFGGSGGFGGSATGFGSGGGSFGGGNSGFGEGGHGGGERNNNCFNCQQPGHRSSDCPEPRKEREPRVCYNCQQPGHTSRECTEERKPREGRTGGFGGGAGFGNNGGNDGFGGDGGFGGGEERGPMKCFNCKGEGHRSAECPEPPRGCFNCGEQGHRSNECPNPAKPREGVEGEGPKATYVPVEDNMEDVFNMQKISEGLMFNKFFDAEVKLTSSEKTVGIKPCKTFAEANLTETMQKNVAHAGYSKTTPIQQYALPLVHQGYDIMACAQTGSGKTAAFLLPIMTRLIDDNNLNTAGEGGCYPRCIILTPTRELADQIYNEGRKFAYQTMMEIKPVYGGLAVGYNKGQIEKGATIIVGTVGRIKHFCEEGTIKLDKCRFFVLDEADRMIDAMGFGTDIETIVNYDSMPRKENRQTLMFSATFPDSVQEAARAFLRENYVMIAIDKIGAANKCVLQEFERCERSEKKDKLLELLGIDIDSYTTEKSAEVYTKKTMVFVSQRAMADTLASILSSAQVPAITIHGAREQRERSEALRQFRNGSKPVLIATAVAERGLDIKGVDHVINYDMPDNIDDYIHRIGRTGRVGNSGRATSFISEDCSLLSELVGVLADAQQIVPDWMQGAAGGNYGASGFGSSVPTQVPQDEEGW</sequence>